<evidence type="ECO:0000255" key="1">
    <source>
        <dbReference type="HAMAP-Rule" id="MF_01325"/>
    </source>
</evidence>
<evidence type="ECO:0000256" key="2">
    <source>
        <dbReference type="SAM" id="MobiDB-lite"/>
    </source>
</evidence>
<evidence type="ECO:0000305" key="3"/>
<sequence>MTKGILGRKIGMTQVFAENGELIPVTVIAANPNVVLQKKTTETDGYNAIQLGFEDKREKLTNKPEQGHTAKASTTPKRFIREIRDADVDGLEVGQEVKVDVFATGEIVDVTGISKGKGFQGVIKRHGQSRGPMSHGSRYHRRPGSMGPVAPNRVFKGKKLAGRMGGDQVTIQNLEIVQVDTERNLLLVKGNVPGAKKSLVVVQGAVKVSK</sequence>
<comment type="function">
    <text evidence="1">One of the primary rRNA binding proteins, it binds directly near the 3'-end of the 23S rRNA, where it nucleates assembly of the 50S subunit.</text>
</comment>
<comment type="subunit">
    <text evidence="1">Part of the 50S ribosomal subunit. Forms a cluster with proteins L14 and L19.</text>
</comment>
<comment type="similarity">
    <text evidence="1">Belongs to the universal ribosomal protein uL3 family.</text>
</comment>
<protein>
    <recommendedName>
        <fullName evidence="1">Large ribosomal subunit protein uL3</fullName>
    </recommendedName>
    <alternativeName>
        <fullName evidence="3">50S ribosomal protein L3</fullName>
    </alternativeName>
</protein>
<reference key="1">
    <citation type="submission" date="2008-10" db="EMBL/GenBank/DDBJ databases">
        <title>Genome sequence of Bacillus cereus AH187.</title>
        <authorList>
            <person name="Dodson R.J."/>
            <person name="Durkin A.S."/>
            <person name="Rosovitz M.J."/>
            <person name="Rasko D.A."/>
            <person name="Kolsto A.B."/>
            <person name="Okstad O.A."/>
            <person name="Ravel J."/>
            <person name="Sutton G."/>
        </authorList>
    </citation>
    <scope>NUCLEOTIDE SEQUENCE [LARGE SCALE GENOMIC DNA]</scope>
    <source>
        <strain>AH187</strain>
    </source>
</reference>
<organism>
    <name type="scientific">Bacillus cereus (strain AH187)</name>
    <dbReference type="NCBI Taxonomy" id="405534"/>
    <lineage>
        <taxon>Bacteria</taxon>
        <taxon>Bacillati</taxon>
        <taxon>Bacillota</taxon>
        <taxon>Bacilli</taxon>
        <taxon>Bacillales</taxon>
        <taxon>Bacillaceae</taxon>
        <taxon>Bacillus</taxon>
        <taxon>Bacillus cereus group</taxon>
    </lineage>
</organism>
<name>RL3_BACC7</name>
<accession>B7HQU4</accession>
<feature type="chain" id="PRO_1000141825" description="Large ribosomal subunit protein uL3">
    <location>
        <begin position="1"/>
        <end position="210"/>
    </location>
</feature>
<feature type="region of interest" description="Disordered" evidence="2">
    <location>
        <begin position="125"/>
        <end position="151"/>
    </location>
</feature>
<gene>
    <name evidence="1" type="primary">rplC</name>
    <name type="ordered locus">BCAH187_A0141</name>
</gene>
<keyword id="KW-0687">Ribonucleoprotein</keyword>
<keyword id="KW-0689">Ribosomal protein</keyword>
<keyword id="KW-0694">RNA-binding</keyword>
<keyword id="KW-0699">rRNA-binding</keyword>
<proteinExistence type="inferred from homology"/>
<dbReference type="EMBL" id="CP001177">
    <property type="protein sequence ID" value="ACJ81679.1"/>
    <property type="molecule type" value="Genomic_DNA"/>
</dbReference>
<dbReference type="SMR" id="B7HQU4"/>
<dbReference type="KEGG" id="bcr:BCAH187_A0141"/>
<dbReference type="HOGENOM" id="CLU_044142_4_1_9"/>
<dbReference type="Proteomes" id="UP000002214">
    <property type="component" value="Chromosome"/>
</dbReference>
<dbReference type="GO" id="GO:0022625">
    <property type="term" value="C:cytosolic large ribosomal subunit"/>
    <property type="evidence" value="ECO:0007669"/>
    <property type="project" value="TreeGrafter"/>
</dbReference>
<dbReference type="GO" id="GO:0019843">
    <property type="term" value="F:rRNA binding"/>
    <property type="evidence" value="ECO:0007669"/>
    <property type="project" value="UniProtKB-UniRule"/>
</dbReference>
<dbReference type="GO" id="GO:0003735">
    <property type="term" value="F:structural constituent of ribosome"/>
    <property type="evidence" value="ECO:0007669"/>
    <property type="project" value="InterPro"/>
</dbReference>
<dbReference type="GO" id="GO:0006412">
    <property type="term" value="P:translation"/>
    <property type="evidence" value="ECO:0007669"/>
    <property type="project" value="UniProtKB-UniRule"/>
</dbReference>
<dbReference type="FunFam" id="2.40.30.10:FF:000004">
    <property type="entry name" value="50S ribosomal protein L3"/>
    <property type="match status" value="1"/>
</dbReference>
<dbReference type="FunFam" id="3.30.160.810:FF:000002">
    <property type="entry name" value="50S ribosomal protein L3"/>
    <property type="match status" value="1"/>
</dbReference>
<dbReference type="Gene3D" id="3.30.160.810">
    <property type="match status" value="1"/>
</dbReference>
<dbReference type="Gene3D" id="2.40.30.10">
    <property type="entry name" value="Translation factors"/>
    <property type="match status" value="1"/>
</dbReference>
<dbReference type="HAMAP" id="MF_01325_B">
    <property type="entry name" value="Ribosomal_uL3_B"/>
    <property type="match status" value="1"/>
</dbReference>
<dbReference type="InterPro" id="IPR000597">
    <property type="entry name" value="Ribosomal_uL3"/>
</dbReference>
<dbReference type="InterPro" id="IPR019927">
    <property type="entry name" value="Ribosomal_uL3_bac/org-type"/>
</dbReference>
<dbReference type="InterPro" id="IPR019926">
    <property type="entry name" value="Ribosomal_uL3_CS"/>
</dbReference>
<dbReference type="InterPro" id="IPR009000">
    <property type="entry name" value="Transl_B-barrel_sf"/>
</dbReference>
<dbReference type="NCBIfam" id="TIGR03625">
    <property type="entry name" value="L3_bact"/>
    <property type="match status" value="1"/>
</dbReference>
<dbReference type="PANTHER" id="PTHR11229">
    <property type="entry name" value="50S RIBOSOMAL PROTEIN L3"/>
    <property type="match status" value="1"/>
</dbReference>
<dbReference type="PANTHER" id="PTHR11229:SF16">
    <property type="entry name" value="LARGE RIBOSOMAL SUBUNIT PROTEIN UL3C"/>
    <property type="match status" value="1"/>
</dbReference>
<dbReference type="Pfam" id="PF00297">
    <property type="entry name" value="Ribosomal_L3"/>
    <property type="match status" value="1"/>
</dbReference>
<dbReference type="SUPFAM" id="SSF50447">
    <property type="entry name" value="Translation proteins"/>
    <property type="match status" value="1"/>
</dbReference>
<dbReference type="PROSITE" id="PS00474">
    <property type="entry name" value="RIBOSOMAL_L3"/>
    <property type="match status" value="1"/>
</dbReference>